<reference key="1">
    <citation type="journal article" date="2001" name="J. Biol. Chem.">
        <title>Cloning and characterization of a p53-related protein kinase expressed in interleukin-2-activated cytotoxic T-cells, epithelial tumor cell lines, and the testes.</title>
        <authorList>
            <person name="Abe Y."/>
            <person name="Matsumoto S."/>
            <person name="Wei S."/>
            <person name="Nezu K."/>
            <person name="Miyoshi A."/>
            <person name="Kito K."/>
            <person name="Ueda N."/>
            <person name="Shigemoto K."/>
            <person name="Hitsumoto Y."/>
            <person name="Nikawa J."/>
            <person name="Enomoto Y."/>
        </authorList>
    </citation>
    <scope>NUCLEOTIDE SEQUENCE [MRNA]</scope>
    <source>
        <tissue>Fetus</tissue>
    </source>
</reference>
<reference key="2">
    <citation type="journal article" date="2005" name="Science">
        <title>The transcriptional landscape of the mammalian genome.</title>
        <authorList>
            <person name="Carninci P."/>
            <person name="Kasukawa T."/>
            <person name="Katayama S."/>
            <person name="Gough J."/>
            <person name="Frith M.C."/>
            <person name="Maeda N."/>
            <person name="Oyama R."/>
            <person name="Ravasi T."/>
            <person name="Lenhard B."/>
            <person name="Wells C."/>
            <person name="Kodzius R."/>
            <person name="Shimokawa K."/>
            <person name="Bajic V.B."/>
            <person name="Brenner S.E."/>
            <person name="Batalov S."/>
            <person name="Forrest A.R."/>
            <person name="Zavolan M."/>
            <person name="Davis M.J."/>
            <person name="Wilming L.G."/>
            <person name="Aidinis V."/>
            <person name="Allen J.E."/>
            <person name="Ambesi-Impiombato A."/>
            <person name="Apweiler R."/>
            <person name="Aturaliya R.N."/>
            <person name="Bailey T.L."/>
            <person name="Bansal M."/>
            <person name="Baxter L."/>
            <person name="Beisel K.W."/>
            <person name="Bersano T."/>
            <person name="Bono H."/>
            <person name="Chalk A.M."/>
            <person name="Chiu K.P."/>
            <person name="Choudhary V."/>
            <person name="Christoffels A."/>
            <person name="Clutterbuck D.R."/>
            <person name="Crowe M.L."/>
            <person name="Dalla E."/>
            <person name="Dalrymple B.P."/>
            <person name="de Bono B."/>
            <person name="Della Gatta G."/>
            <person name="di Bernardo D."/>
            <person name="Down T."/>
            <person name="Engstrom P."/>
            <person name="Fagiolini M."/>
            <person name="Faulkner G."/>
            <person name="Fletcher C.F."/>
            <person name="Fukushima T."/>
            <person name="Furuno M."/>
            <person name="Futaki S."/>
            <person name="Gariboldi M."/>
            <person name="Georgii-Hemming P."/>
            <person name="Gingeras T.R."/>
            <person name="Gojobori T."/>
            <person name="Green R.E."/>
            <person name="Gustincich S."/>
            <person name="Harbers M."/>
            <person name="Hayashi Y."/>
            <person name="Hensch T.K."/>
            <person name="Hirokawa N."/>
            <person name="Hill D."/>
            <person name="Huminiecki L."/>
            <person name="Iacono M."/>
            <person name="Ikeo K."/>
            <person name="Iwama A."/>
            <person name="Ishikawa T."/>
            <person name="Jakt M."/>
            <person name="Kanapin A."/>
            <person name="Katoh M."/>
            <person name="Kawasawa Y."/>
            <person name="Kelso J."/>
            <person name="Kitamura H."/>
            <person name="Kitano H."/>
            <person name="Kollias G."/>
            <person name="Krishnan S.P."/>
            <person name="Kruger A."/>
            <person name="Kummerfeld S.K."/>
            <person name="Kurochkin I.V."/>
            <person name="Lareau L.F."/>
            <person name="Lazarevic D."/>
            <person name="Lipovich L."/>
            <person name="Liu J."/>
            <person name="Liuni S."/>
            <person name="McWilliam S."/>
            <person name="Madan Babu M."/>
            <person name="Madera M."/>
            <person name="Marchionni L."/>
            <person name="Matsuda H."/>
            <person name="Matsuzawa S."/>
            <person name="Miki H."/>
            <person name="Mignone F."/>
            <person name="Miyake S."/>
            <person name="Morris K."/>
            <person name="Mottagui-Tabar S."/>
            <person name="Mulder N."/>
            <person name="Nakano N."/>
            <person name="Nakauchi H."/>
            <person name="Ng P."/>
            <person name="Nilsson R."/>
            <person name="Nishiguchi S."/>
            <person name="Nishikawa S."/>
            <person name="Nori F."/>
            <person name="Ohara O."/>
            <person name="Okazaki Y."/>
            <person name="Orlando V."/>
            <person name="Pang K.C."/>
            <person name="Pavan W.J."/>
            <person name="Pavesi G."/>
            <person name="Pesole G."/>
            <person name="Petrovsky N."/>
            <person name="Piazza S."/>
            <person name="Reed J."/>
            <person name="Reid J.F."/>
            <person name="Ring B.Z."/>
            <person name="Ringwald M."/>
            <person name="Rost B."/>
            <person name="Ruan Y."/>
            <person name="Salzberg S.L."/>
            <person name="Sandelin A."/>
            <person name="Schneider C."/>
            <person name="Schoenbach C."/>
            <person name="Sekiguchi K."/>
            <person name="Semple C.A."/>
            <person name="Seno S."/>
            <person name="Sessa L."/>
            <person name="Sheng Y."/>
            <person name="Shibata Y."/>
            <person name="Shimada H."/>
            <person name="Shimada K."/>
            <person name="Silva D."/>
            <person name="Sinclair B."/>
            <person name="Sperling S."/>
            <person name="Stupka E."/>
            <person name="Sugiura K."/>
            <person name="Sultana R."/>
            <person name="Takenaka Y."/>
            <person name="Taki K."/>
            <person name="Tammoja K."/>
            <person name="Tan S.L."/>
            <person name="Tang S."/>
            <person name="Taylor M.S."/>
            <person name="Tegner J."/>
            <person name="Teichmann S.A."/>
            <person name="Ueda H.R."/>
            <person name="van Nimwegen E."/>
            <person name="Verardo R."/>
            <person name="Wei C.L."/>
            <person name="Yagi K."/>
            <person name="Yamanishi H."/>
            <person name="Zabarovsky E."/>
            <person name="Zhu S."/>
            <person name="Zimmer A."/>
            <person name="Hide W."/>
            <person name="Bult C."/>
            <person name="Grimmond S.M."/>
            <person name="Teasdale R.D."/>
            <person name="Liu E.T."/>
            <person name="Brusic V."/>
            <person name="Quackenbush J."/>
            <person name="Wahlestedt C."/>
            <person name="Mattick J.S."/>
            <person name="Hume D.A."/>
            <person name="Kai C."/>
            <person name="Sasaki D."/>
            <person name="Tomaru Y."/>
            <person name="Fukuda S."/>
            <person name="Kanamori-Katayama M."/>
            <person name="Suzuki M."/>
            <person name="Aoki J."/>
            <person name="Arakawa T."/>
            <person name="Iida J."/>
            <person name="Imamura K."/>
            <person name="Itoh M."/>
            <person name="Kato T."/>
            <person name="Kawaji H."/>
            <person name="Kawagashira N."/>
            <person name="Kawashima T."/>
            <person name="Kojima M."/>
            <person name="Kondo S."/>
            <person name="Konno H."/>
            <person name="Nakano K."/>
            <person name="Ninomiya N."/>
            <person name="Nishio T."/>
            <person name="Okada M."/>
            <person name="Plessy C."/>
            <person name="Shibata K."/>
            <person name="Shiraki T."/>
            <person name="Suzuki S."/>
            <person name="Tagami M."/>
            <person name="Waki K."/>
            <person name="Watahiki A."/>
            <person name="Okamura-Oho Y."/>
            <person name="Suzuki H."/>
            <person name="Kawai J."/>
            <person name="Hayashizaki Y."/>
        </authorList>
    </citation>
    <scope>NUCLEOTIDE SEQUENCE [LARGE SCALE MRNA]</scope>
</reference>
<reference key="3">
    <citation type="journal article" date="2004" name="Genome Res.">
        <title>The status, quality, and expansion of the NIH full-length cDNA project: the Mammalian Gene Collection (MGC).</title>
        <authorList>
            <consortium name="The MGC Project Team"/>
        </authorList>
    </citation>
    <scope>NUCLEOTIDE SEQUENCE [LARGE SCALE MRNA]</scope>
    <source>
        <tissue>Salivary gland</tissue>
    </source>
</reference>
<proteinExistence type="evidence at transcript level"/>
<organism>
    <name type="scientific">Mus musculus</name>
    <name type="common">Mouse</name>
    <dbReference type="NCBI Taxonomy" id="10090"/>
    <lineage>
        <taxon>Eukaryota</taxon>
        <taxon>Metazoa</taxon>
        <taxon>Chordata</taxon>
        <taxon>Craniata</taxon>
        <taxon>Vertebrata</taxon>
        <taxon>Euteleostomi</taxon>
        <taxon>Mammalia</taxon>
        <taxon>Eutheria</taxon>
        <taxon>Euarchontoglires</taxon>
        <taxon>Glires</taxon>
        <taxon>Rodentia</taxon>
        <taxon>Myomorpha</taxon>
        <taxon>Muroidea</taxon>
        <taxon>Muridae</taxon>
        <taxon>Murinae</taxon>
        <taxon>Mus</taxon>
        <taxon>Mus</taxon>
    </lineage>
</organism>
<gene>
    <name evidence="9" type="primary">Tp53rkb</name>
    <name evidence="10" type="synonym">Prpk</name>
    <name evidence="10" type="synonym">Tp53rk</name>
    <name evidence="10" type="synonym">Trp53rk</name>
    <name evidence="10" type="synonym">Trp53rkb</name>
</gene>
<accession>Q99PW4</accession>
<accession>Q91W37</accession>
<accession>Q9CZ32</accession>
<dbReference type="EC" id="3.6.-.-" evidence="4"/>
<dbReference type="EC" id="2.7.11.1" evidence="3"/>
<dbReference type="EMBL" id="AB028045">
    <property type="protein sequence ID" value="BAB21614.1"/>
    <property type="molecule type" value="mRNA"/>
</dbReference>
<dbReference type="EMBL" id="AK013049">
    <property type="status" value="NOT_ANNOTATED_CDS"/>
    <property type="molecule type" value="mRNA"/>
</dbReference>
<dbReference type="EMBL" id="BC017155">
    <property type="protein sequence ID" value="AAH17155.1"/>
    <property type="molecule type" value="mRNA"/>
</dbReference>
<dbReference type="CCDS" id="CCDS17090.1"/>
<dbReference type="SMR" id="Q99PW4"/>
<dbReference type="BioGRID" id="218081">
    <property type="interactions" value="1"/>
</dbReference>
<dbReference type="FunCoup" id="Q99PW4">
    <property type="interactions" value="1221"/>
</dbReference>
<dbReference type="STRING" id="10090.ENSMUSP00000115353"/>
<dbReference type="iPTMnet" id="Q99PW4"/>
<dbReference type="PhosphoSitePlus" id="Q99PW4"/>
<dbReference type="PaxDb" id="10090-ENSMUSP00000115353"/>
<dbReference type="ProteomicsDB" id="291533"/>
<dbReference type="Pumba" id="Q99PW4"/>
<dbReference type="AGR" id="MGI:1914050"/>
<dbReference type="MGI" id="MGI:1914050">
    <property type="gene designation" value="Trp53rkb"/>
</dbReference>
<dbReference type="eggNOG" id="KOG3087">
    <property type="taxonomic scope" value="Eukaryota"/>
</dbReference>
<dbReference type="InParanoid" id="Q99PW4"/>
<dbReference type="PhylomeDB" id="Q99PW4"/>
<dbReference type="BRENDA" id="2.7.11.1">
    <property type="organism ID" value="3474"/>
</dbReference>
<dbReference type="Reactome" id="R-MMU-6804756">
    <property type="pathway name" value="Regulation of TP53 Activity through Phosphorylation"/>
</dbReference>
<dbReference type="ChiTaRS" id="Prpf4b">
    <property type="organism name" value="mouse"/>
</dbReference>
<dbReference type="PRO" id="PR:Q99PW4"/>
<dbReference type="Proteomes" id="UP000000589">
    <property type="component" value="Unplaced"/>
</dbReference>
<dbReference type="RNAct" id="Q99PW4">
    <property type="molecule type" value="protein"/>
</dbReference>
<dbReference type="GO" id="GO:0005737">
    <property type="term" value="C:cytoplasm"/>
    <property type="evidence" value="ECO:0000250"/>
    <property type="project" value="UniProtKB"/>
</dbReference>
<dbReference type="GO" id="GO:0000408">
    <property type="term" value="C:EKC/KEOPS complex"/>
    <property type="evidence" value="ECO:0000250"/>
    <property type="project" value="UniProtKB"/>
</dbReference>
<dbReference type="GO" id="GO:0005634">
    <property type="term" value="C:nucleus"/>
    <property type="evidence" value="ECO:0000250"/>
    <property type="project" value="UniProtKB"/>
</dbReference>
<dbReference type="GO" id="GO:0005524">
    <property type="term" value="F:ATP binding"/>
    <property type="evidence" value="ECO:0007669"/>
    <property type="project" value="UniProtKB-KW"/>
</dbReference>
<dbReference type="GO" id="GO:0016787">
    <property type="term" value="F:hydrolase activity"/>
    <property type="evidence" value="ECO:0007669"/>
    <property type="project" value="UniProtKB-KW"/>
</dbReference>
<dbReference type="GO" id="GO:0106310">
    <property type="term" value="F:protein serine kinase activity"/>
    <property type="evidence" value="ECO:0007669"/>
    <property type="project" value="RHEA"/>
</dbReference>
<dbReference type="GO" id="GO:0004674">
    <property type="term" value="F:protein serine/threonine kinase activity"/>
    <property type="evidence" value="ECO:0000250"/>
    <property type="project" value="HGNC"/>
</dbReference>
<dbReference type="GO" id="GO:0008033">
    <property type="term" value="P:tRNA processing"/>
    <property type="evidence" value="ECO:0007669"/>
    <property type="project" value="UniProtKB-KW"/>
</dbReference>
<dbReference type="FunFam" id="3.30.200.20:FF:000201">
    <property type="entry name" value="TP53-regulating kinase isoform X1"/>
    <property type="match status" value="1"/>
</dbReference>
<dbReference type="FunFam" id="1.10.510.10:FF:000323">
    <property type="entry name" value="TP53-regulating kinase, putative"/>
    <property type="match status" value="1"/>
</dbReference>
<dbReference type="Gene3D" id="3.30.200.20">
    <property type="entry name" value="Phosphorylase Kinase, domain 1"/>
    <property type="match status" value="1"/>
</dbReference>
<dbReference type="Gene3D" id="1.10.510.10">
    <property type="entry name" value="Transferase(Phosphotransferase) domain 1"/>
    <property type="match status" value="1"/>
</dbReference>
<dbReference type="InterPro" id="IPR022495">
    <property type="entry name" value="Bud32"/>
</dbReference>
<dbReference type="InterPro" id="IPR011009">
    <property type="entry name" value="Kinase-like_dom_sf"/>
</dbReference>
<dbReference type="InterPro" id="IPR000719">
    <property type="entry name" value="Prot_kinase_dom"/>
</dbReference>
<dbReference type="InterPro" id="IPR008266">
    <property type="entry name" value="Tyr_kinase_AS"/>
</dbReference>
<dbReference type="NCBIfam" id="TIGR03724">
    <property type="entry name" value="arch_bud32"/>
    <property type="match status" value="1"/>
</dbReference>
<dbReference type="PANTHER" id="PTHR12209:SF0">
    <property type="entry name" value="EKC_KEOPS COMPLEX SUBUNIT TP53RK"/>
    <property type="match status" value="1"/>
</dbReference>
<dbReference type="PANTHER" id="PTHR12209">
    <property type="entry name" value="NON-SPECIFIC SERINE/THREONINE PROTEIN KINASE"/>
    <property type="match status" value="1"/>
</dbReference>
<dbReference type="Pfam" id="PF06293">
    <property type="entry name" value="Kdo"/>
    <property type="match status" value="1"/>
</dbReference>
<dbReference type="SUPFAM" id="SSF56112">
    <property type="entry name" value="Protein kinase-like (PK-like)"/>
    <property type="match status" value="1"/>
</dbReference>
<dbReference type="PROSITE" id="PS50011">
    <property type="entry name" value="PROTEIN_KINASE_DOM"/>
    <property type="match status" value="1"/>
</dbReference>
<dbReference type="PROSITE" id="PS00109">
    <property type="entry name" value="PROTEIN_KINASE_TYR"/>
    <property type="match status" value="1"/>
</dbReference>
<keyword id="KW-0067">ATP-binding</keyword>
<keyword id="KW-0378">Hydrolase</keyword>
<keyword id="KW-0418">Kinase</keyword>
<keyword id="KW-0547">Nucleotide-binding</keyword>
<keyword id="KW-0539">Nucleus</keyword>
<keyword id="KW-0597">Phosphoprotein</keyword>
<keyword id="KW-1185">Reference proteome</keyword>
<keyword id="KW-0723">Serine/threonine-protein kinase</keyword>
<keyword id="KW-0808">Transferase</keyword>
<keyword id="KW-0819">tRNA processing</keyword>
<feature type="chain" id="PRO_0000088191" description="EKC/KEOPS complex subunit Tp53rkb">
    <location>
        <begin position="1"/>
        <end position="244"/>
    </location>
</feature>
<feature type="domain" description="Protein kinase" evidence="6">
    <location>
        <begin position="24"/>
        <end position="244"/>
    </location>
</feature>
<feature type="short sequence motif" description="Nuclear localization signal" evidence="5">
    <location>
        <begin position="69"/>
        <end position="86"/>
    </location>
</feature>
<feature type="active site" description="Proton acceptor" evidence="6 7">
    <location>
        <position position="153"/>
    </location>
</feature>
<feature type="binding site" evidence="6">
    <location>
        <begin position="30"/>
        <end position="38"/>
    </location>
    <ligand>
        <name>ATP</name>
        <dbReference type="ChEBI" id="CHEBI:30616"/>
    </ligand>
</feature>
<feature type="binding site" evidence="6">
    <location>
        <position position="51"/>
    </location>
    <ligand>
        <name>ATP</name>
        <dbReference type="ChEBI" id="CHEBI:30616"/>
    </ligand>
</feature>
<feature type="modified residue" description="Phosphoserine" evidence="3">
    <location>
        <position position="25"/>
    </location>
</feature>
<feature type="sequence conflict" description="In Ref. 3; AAH17155." evidence="9" ref="3">
    <original>T</original>
    <variation>V</variation>
    <location>
        <position position="4"/>
    </location>
</feature>
<feature type="sequence conflict" description="In Ref. 2." evidence="9" ref="2">
    <original>A</original>
    <variation>V</variation>
    <location>
        <position position="208"/>
    </location>
</feature>
<feature type="sequence conflict" description="In Ref. 2." evidence="9" ref="2">
    <original>SK</original>
    <variation>TQ</variation>
    <location>
        <begin position="220"/>
        <end position="221"/>
    </location>
</feature>
<protein>
    <recommendedName>
        <fullName evidence="9">EKC/KEOPS complex subunit Tp53rkb</fullName>
        <ecNumber evidence="4">3.6.-.-</ecNumber>
    </recommendedName>
    <alternativeName>
        <fullName evidence="3">Atypical serine/threonine protein kinase Tp53rk</fullName>
    </alternativeName>
    <alternativeName>
        <fullName evidence="9">EKC/KEOPS complex subunit Tp53rk</fullName>
    </alternativeName>
    <alternativeName>
        <fullName evidence="10">Nori-2</fullName>
    </alternativeName>
    <alternativeName>
        <fullName evidence="3">TP53-regulating kinase</fullName>
        <ecNumber evidence="3">2.7.11.1</ecNumber>
    </alternativeName>
    <alternativeName>
        <fullName evidence="8">p53-related protein kinase</fullName>
    </alternativeName>
</protein>
<name>PRPKB_MOUSE</name>
<evidence type="ECO:0000250" key="1"/>
<evidence type="ECO:0000250" key="2">
    <source>
        <dbReference type="UniProtKB" id="P53323"/>
    </source>
</evidence>
<evidence type="ECO:0000250" key="3">
    <source>
        <dbReference type="UniProtKB" id="Q96S44"/>
    </source>
</evidence>
<evidence type="ECO:0000250" key="4">
    <source>
        <dbReference type="UniProtKB" id="Q9UYB9"/>
    </source>
</evidence>
<evidence type="ECO:0000255" key="5"/>
<evidence type="ECO:0000255" key="6">
    <source>
        <dbReference type="PROSITE-ProRule" id="PRU00159"/>
    </source>
</evidence>
<evidence type="ECO:0000255" key="7">
    <source>
        <dbReference type="PROSITE-ProRule" id="PRU10028"/>
    </source>
</evidence>
<evidence type="ECO:0000303" key="8">
    <source>
    </source>
</evidence>
<evidence type="ECO:0000305" key="9"/>
<evidence type="ECO:0000312" key="10">
    <source>
        <dbReference type="MGI" id="MGI:1914050"/>
    </source>
</evidence>
<comment type="function">
    <text evidence="1 2 3 4">Component of the EKC/KEOPS complex that is required for the formation of a threonylcarbamoyl group on adenosine at position 37 (t(6)A37) in tRNAs that read codons beginning with adenine. The complex is probably involved in the transfer of the threonylcarbamoyl moiety of threonylcarbamoyl-AMP (TC-AMP) to the N6 group of A37. TP53RK has ATPase activity in the context of the EKC/KEOPS complex and likely plays a supporting role to the catalytic subunit OSGEP (By similarity). Atypical protein kinase that phosphorylates 'Ser-15' of p53/TP53 protein and may therefore participate in its activation (By similarity).</text>
</comment>
<comment type="catalytic activity">
    <reaction evidence="3">
        <text>L-seryl-[protein] + ATP = O-phospho-L-seryl-[protein] + ADP + H(+)</text>
        <dbReference type="Rhea" id="RHEA:17989"/>
        <dbReference type="Rhea" id="RHEA-COMP:9863"/>
        <dbReference type="Rhea" id="RHEA-COMP:11604"/>
        <dbReference type="ChEBI" id="CHEBI:15378"/>
        <dbReference type="ChEBI" id="CHEBI:29999"/>
        <dbReference type="ChEBI" id="CHEBI:30616"/>
        <dbReference type="ChEBI" id="CHEBI:83421"/>
        <dbReference type="ChEBI" id="CHEBI:456216"/>
        <dbReference type="EC" id="2.7.11.1"/>
    </reaction>
</comment>
<comment type="catalytic activity">
    <reaction evidence="3">
        <text>L-threonyl-[protein] + ATP = O-phospho-L-threonyl-[protein] + ADP + H(+)</text>
        <dbReference type="Rhea" id="RHEA:46608"/>
        <dbReference type="Rhea" id="RHEA-COMP:11060"/>
        <dbReference type="Rhea" id="RHEA-COMP:11605"/>
        <dbReference type="ChEBI" id="CHEBI:15378"/>
        <dbReference type="ChEBI" id="CHEBI:30013"/>
        <dbReference type="ChEBI" id="CHEBI:30616"/>
        <dbReference type="ChEBI" id="CHEBI:61977"/>
        <dbReference type="ChEBI" id="CHEBI:456216"/>
        <dbReference type="EC" id="2.7.11.1"/>
    </reaction>
</comment>
<comment type="subunit">
    <text evidence="3">Component of the EKC/KEOPS complex composed of at least GON7, TP53RK, TPRKB, OSGEP and LAGE3; the whole complex dimerizes.</text>
</comment>
<comment type="subcellular location">
    <subcellularLocation>
        <location evidence="3">Nucleus</location>
    </subcellularLocation>
</comment>
<comment type="domain">
    <text evidence="2 4">This protein is considered an atypical serine/threonine kinase, because it lacks the conventional structural elements necessary for the substrate recognition as well as a lysine residue that in all other serine/threonine kinases participates in the catalytic event. TP53RK has protein kinase activity in vitro, but in the context of the EKC/KEOPS complex, the catalytic subunit OSGEP switches the activity of TP53RK from kinase into ATPase (By similarity).</text>
</comment>
<comment type="similarity">
    <text evidence="9">Belongs to the protein kinase superfamily. BUD32 family.</text>
</comment>
<comment type="sequence caution" evidence="9">
    <conflict type="frameshift">
        <sequence resource="EMBL" id="AK013049"/>
    </conflict>
</comment>
<sequence length="244" mass="27394">MAGTSSEAEAEALAAARERSRLFLSGLELVQQGAEARVFRGRFQGRAAVVKHRFPKSYRHPELEARLGRRRTVQEARALLRCRRAGIAAPVVFFVDYASNCLYMEEIEDSVTVRDYIQSTMETEKDPQCLLDLARRMGQVLAGMHDQDLIHGDLTTSNMLLRRPLAQLHIVLIDFGLSFVSGLPEDKGVDLYVLEKAFLSTHPHTETAFEAFLKSYGASSKKSSPVLKKLDEVRLRGRKRSMVG</sequence>